<comment type="function">
    <text evidence="1">Catalyzes the ATP-dependent conversion of 7-carboxy-7-deazaguanine (CDG) to 7-cyano-7-deazaguanine (preQ(0)).</text>
</comment>
<comment type="catalytic activity">
    <reaction evidence="1">
        <text>7-carboxy-7-deazaguanine + NH4(+) + ATP = 7-cyano-7-deazaguanine + ADP + phosphate + H2O + H(+)</text>
        <dbReference type="Rhea" id="RHEA:27982"/>
        <dbReference type="ChEBI" id="CHEBI:15377"/>
        <dbReference type="ChEBI" id="CHEBI:15378"/>
        <dbReference type="ChEBI" id="CHEBI:28938"/>
        <dbReference type="ChEBI" id="CHEBI:30616"/>
        <dbReference type="ChEBI" id="CHEBI:43474"/>
        <dbReference type="ChEBI" id="CHEBI:45075"/>
        <dbReference type="ChEBI" id="CHEBI:61036"/>
        <dbReference type="ChEBI" id="CHEBI:456216"/>
        <dbReference type="EC" id="6.3.4.20"/>
    </reaction>
</comment>
<comment type="cofactor">
    <cofactor evidence="1">
        <name>Zn(2+)</name>
        <dbReference type="ChEBI" id="CHEBI:29105"/>
    </cofactor>
    <text evidence="1">Binds 1 zinc ion per subunit.</text>
</comment>
<comment type="pathway">
    <text evidence="1">Purine metabolism; 7-cyano-7-deazaguanine biosynthesis.</text>
</comment>
<comment type="subunit">
    <text evidence="1">Homodimer.</text>
</comment>
<comment type="similarity">
    <text evidence="1">Belongs to the QueC family.</text>
</comment>
<gene>
    <name evidence="1" type="primary">queC</name>
    <name type="ordered locus">Csac_0100</name>
</gene>
<feature type="chain" id="PRO_1000069760" description="7-cyano-7-deazaguanine synthase">
    <location>
        <begin position="1"/>
        <end position="225"/>
    </location>
</feature>
<feature type="binding site" evidence="1">
    <location>
        <begin position="7"/>
        <end position="17"/>
    </location>
    <ligand>
        <name>ATP</name>
        <dbReference type="ChEBI" id="CHEBI:30616"/>
    </ligand>
</feature>
<feature type="binding site" evidence="1">
    <location>
        <position position="183"/>
    </location>
    <ligand>
        <name>Zn(2+)</name>
        <dbReference type="ChEBI" id="CHEBI:29105"/>
    </ligand>
</feature>
<feature type="binding site" evidence="1">
    <location>
        <position position="191"/>
    </location>
    <ligand>
        <name>Zn(2+)</name>
        <dbReference type="ChEBI" id="CHEBI:29105"/>
    </ligand>
</feature>
<feature type="binding site" evidence="1">
    <location>
        <position position="194"/>
    </location>
    <ligand>
        <name>Zn(2+)</name>
        <dbReference type="ChEBI" id="CHEBI:29105"/>
    </ligand>
</feature>
<feature type="binding site" evidence="1">
    <location>
        <position position="197"/>
    </location>
    <ligand>
        <name>Zn(2+)</name>
        <dbReference type="ChEBI" id="CHEBI:29105"/>
    </ligand>
</feature>
<protein>
    <recommendedName>
        <fullName evidence="1">7-cyano-7-deazaguanine synthase</fullName>
        <ecNumber evidence="1">6.3.4.20</ecNumber>
    </recommendedName>
    <alternativeName>
        <fullName evidence="1">7-cyano-7-carbaguanine synthase</fullName>
    </alternativeName>
    <alternativeName>
        <fullName evidence="1">PreQ(0) synthase</fullName>
    </alternativeName>
    <alternativeName>
        <fullName evidence="1">Queuosine biosynthesis protein QueC</fullName>
    </alternativeName>
</protein>
<dbReference type="EC" id="6.3.4.20" evidence="1"/>
<dbReference type="EMBL" id="CP000679">
    <property type="protein sequence ID" value="ABP65753.1"/>
    <property type="molecule type" value="Genomic_DNA"/>
</dbReference>
<dbReference type="RefSeq" id="WP_011915715.1">
    <property type="nucleotide sequence ID" value="NC_009437.1"/>
</dbReference>
<dbReference type="SMR" id="A4XFR8"/>
<dbReference type="STRING" id="351627.Csac_0100"/>
<dbReference type="KEGG" id="csc:Csac_0100"/>
<dbReference type="eggNOG" id="COG0603">
    <property type="taxonomic scope" value="Bacteria"/>
</dbReference>
<dbReference type="HOGENOM" id="CLU_081854_1_0_9"/>
<dbReference type="OrthoDB" id="9789567at2"/>
<dbReference type="UniPathway" id="UPA00391"/>
<dbReference type="Proteomes" id="UP000000256">
    <property type="component" value="Chromosome"/>
</dbReference>
<dbReference type="GO" id="GO:0005524">
    <property type="term" value="F:ATP binding"/>
    <property type="evidence" value="ECO:0007669"/>
    <property type="project" value="UniProtKB-UniRule"/>
</dbReference>
<dbReference type="GO" id="GO:0016879">
    <property type="term" value="F:ligase activity, forming carbon-nitrogen bonds"/>
    <property type="evidence" value="ECO:0007669"/>
    <property type="project" value="UniProtKB-UniRule"/>
</dbReference>
<dbReference type="GO" id="GO:0008270">
    <property type="term" value="F:zinc ion binding"/>
    <property type="evidence" value="ECO:0007669"/>
    <property type="project" value="UniProtKB-UniRule"/>
</dbReference>
<dbReference type="GO" id="GO:0008616">
    <property type="term" value="P:queuosine biosynthetic process"/>
    <property type="evidence" value="ECO:0007669"/>
    <property type="project" value="UniProtKB-UniRule"/>
</dbReference>
<dbReference type="CDD" id="cd01995">
    <property type="entry name" value="QueC-like"/>
    <property type="match status" value="1"/>
</dbReference>
<dbReference type="Gene3D" id="3.40.50.620">
    <property type="entry name" value="HUPs"/>
    <property type="match status" value="1"/>
</dbReference>
<dbReference type="HAMAP" id="MF_01633">
    <property type="entry name" value="QueC"/>
    <property type="match status" value="1"/>
</dbReference>
<dbReference type="InterPro" id="IPR018317">
    <property type="entry name" value="QueC"/>
</dbReference>
<dbReference type="InterPro" id="IPR014729">
    <property type="entry name" value="Rossmann-like_a/b/a_fold"/>
</dbReference>
<dbReference type="NCBIfam" id="TIGR00364">
    <property type="entry name" value="7-cyano-7-deazaguanine synthase QueC"/>
    <property type="match status" value="1"/>
</dbReference>
<dbReference type="PANTHER" id="PTHR42914">
    <property type="entry name" value="7-CYANO-7-DEAZAGUANINE SYNTHASE"/>
    <property type="match status" value="1"/>
</dbReference>
<dbReference type="PANTHER" id="PTHR42914:SF1">
    <property type="entry name" value="7-CYANO-7-DEAZAGUANINE SYNTHASE"/>
    <property type="match status" value="1"/>
</dbReference>
<dbReference type="Pfam" id="PF06508">
    <property type="entry name" value="QueC"/>
    <property type="match status" value="1"/>
</dbReference>
<dbReference type="PIRSF" id="PIRSF006293">
    <property type="entry name" value="ExsB"/>
    <property type="match status" value="1"/>
</dbReference>
<dbReference type="SUPFAM" id="SSF52402">
    <property type="entry name" value="Adenine nucleotide alpha hydrolases-like"/>
    <property type="match status" value="1"/>
</dbReference>
<keyword id="KW-0067">ATP-binding</keyword>
<keyword id="KW-0436">Ligase</keyword>
<keyword id="KW-0479">Metal-binding</keyword>
<keyword id="KW-0547">Nucleotide-binding</keyword>
<keyword id="KW-0671">Queuosine biosynthesis</keyword>
<keyword id="KW-0862">Zinc</keyword>
<proteinExistence type="inferred from homology"/>
<organism>
    <name type="scientific">Caldicellulosiruptor saccharolyticus (strain ATCC 43494 / DSM 8903 / Tp8T 6331)</name>
    <dbReference type="NCBI Taxonomy" id="351627"/>
    <lineage>
        <taxon>Bacteria</taxon>
        <taxon>Bacillati</taxon>
        <taxon>Bacillota</taxon>
        <taxon>Bacillota incertae sedis</taxon>
        <taxon>Caldicellulosiruptorales</taxon>
        <taxon>Caldicellulosiruptoraceae</taxon>
        <taxon>Caldicellulosiruptor</taxon>
    </lineage>
</organism>
<evidence type="ECO:0000255" key="1">
    <source>
        <dbReference type="HAMAP-Rule" id="MF_01633"/>
    </source>
</evidence>
<accession>A4XFR8</accession>
<sequence length="225" mass="25521">MRAVVVLSGGMDSTTLLYDVKNQGYETYTISFLYGQKHSKELEFAKKTCELLKVPHKIVDISFFADLAPSALTKSSWSVPEGYYTDESMKQTVVPNRNMVFLSLATSYAISLKAQKLFYGAHAGDHPIYPDCRKEFVEAMKRSILLCDYQIVELEAPYVDLKKEDILKIGLKLGVDYSLTWSCYKGGEKACGRCGTCTERIEAFRKIGVKDPIEYEIEIDWDQKT</sequence>
<name>QUEC_CALS8</name>
<reference key="1">
    <citation type="submission" date="2007-04" db="EMBL/GenBank/DDBJ databases">
        <title>Genome sequence of the thermophilic hydrogen-producing bacterium Caldicellulosiruptor saccharolyticus DSM 8903.</title>
        <authorList>
            <person name="Copeland A."/>
            <person name="Lucas S."/>
            <person name="Lapidus A."/>
            <person name="Barry K."/>
            <person name="Detter J.C."/>
            <person name="Glavina del Rio T."/>
            <person name="Hammon N."/>
            <person name="Israni S."/>
            <person name="Dalin E."/>
            <person name="Tice H."/>
            <person name="Pitluck S."/>
            <person name="Kiss H."/>
            <person name="Brettin T."/>
            <person name="Bruce D."/>
            <person name="Han C."/>
            <person name="Schmutz J."/>
            <person name="Larimer F."/>
            <person name="Land M."/>
            <person name="Hauser L."/>
            <person name="Kyrpides N."/>
            <person name="Lykidis A."/>
            <person name="van de Werken H.J.G."/>
            <person name="Verhaart M.R.A."/>
            <person name="VanFossen A.L."/>
            <person name="Lewis D.L."/>
            <person name="Nichols J.D."/>
            <person name="Goorissen H.P."/>
            <person name="van Niel E.W.J."/>
            <person name="Stams F.J.M."/>
            <person name="Willquist K.U."/>
            <person name="Ward D.E."/>
            <person name="van der Oost J."/>
            <person name="Kelly R.M."/>
            <person name="Kengen S.M.W."/>
            <person name="Richardson P."/>
        </authorList>
    </citation>
    <scope>NUCLEOTIDE SEQUENCE [LARGE SCALE GENOMIC DNA]</scope>
    <source>
        <strain>ATCC 43494 / DSM 8903 / Tp8T 6331</strain>
    </source>
</reference>